<sequence>MEHTIAVIPGSFDPITYGHLDIIERSTDRFDEIHVCVLKNSKKEGTFSLEERMDLIEQSVKHLPNVKVHQFSGLLVDYCEQVGAKTIIRGLRAVSDFEYELRLTSMNKKLNNEIETLYMMSSTNYSFISSSIVKEVAAYRADISEFVPPYVEKALKKKFK</sequence>
<name>COAD_STAAM</name>
<gene>
    <name evidence="1" type="primary">coaD</name>
    <name type="ordered locus">SAV1125</name>
</gene>
<organism>
    <name type="scientific">Staphylococcus aureus (strain Mu50 / ATCC 700699)</name>
    <dbReference type="NCBI Taxonomy" id="158878"/>
    <lineage>
        <taxon>Bacteria</taxon>
        <taxon>Bacillati</taxon>
        <taxon>Bacillota</taxon>
        <taxon>Bacilli</taxon>
        <taxon>Bacillales</taxon>
        <taxon>Staphylococcaceae</taxon>
        <taxon>Staphylococcus</taxon>
    </lineage>
</organism>
<dbReference type="EC" id="2.7.7.3" evidence="1"/>
<dbReference type="EMBL" id="BA000017">
    <property type="protein sequence ID" value="BAB57287.1"/>
    <property type="molecule type" value="Genomic_DNA"/>
</dbReference>
<dbReference type="RefSeq" id="WP_000401377.1">
    <property type="nucleotide sequence ID" value="NC_002758.2"/>
</dbReference>
<dbReference type="SMR" id="P63818"/>
<dbReference type="GeneID" id="98345441"/>
<dbReference type="KEGG" id="sav:SAV1125"/>
<dbReference type="HOGENOM" id="CLU_100149_0_1_9"/>
<dbReference type="PhylomeDB" id="P63818"/>
<dbReference type="UniPathway" id="UPA00241">
    <property type="reaction ID" value="UER00355"/>
</dbReference>
<dbReference type="Proteomes" id="UP000002481">
    <property type="component" value="Chromosome"/>
</dbReference>
<dbReference type="GO" id="GO:0005737">
    <property type="term" value="C:cytoplasm"/>
    <property type="evidence" value="ECO:0007669"/>
    <property type="project" value="UniProtKB-SubCell"/>
</dbReference>
<dbReference type="GO" id="GO:0005524">
    <property type="term" value="F:ATP binding"/>
    <property type="evidence" value="ECO:0007669"/>
    <property type="project" value="UniProtKB-KW"/>
</dbReference>
<dbReference type="GO" id="GO:0004595">
    <property type="term" value="F:pantetheine-phosphate adenylyltransferase activity"/>
    <property type="evidence" value="ECO:0007669"/>
    <property type="project" value="UniProtKB-UniRule"/>
</dbReference>
<dbReference type="GO" id="GO:0015937">
    <property type="term" value="P:coenzyme A biosynthetic process"/>
    <property type="evidence" value="ECO:0007669"/>
    <property type="project" value="UniProtKB-UniRule"/>
</dbReference>
<dbReference type="CDD" id="cd02163">
    <property type="entry name" value="PPAT"/>
    <property type="match status" value="1"/>
</dbReference>
<dbReference type="Gene3D" id="3.40.50.620">
    <property type="entry name" value="HUPs"/>
    <property type="match status" value="1"/>
</dbReference>
<dbReference type="HAMAP" id="MF_00151">
    <property type="entry name" value="PPAT_bact"/>
    <property type="match status" value="1"/>
</dbReference>
<dbReference type="InterPro" id="IPR004821">
    <property type="entry name" value="Cyt_trans-like"/>
</dbReference>
<dbReference type="InterPro" id="IPR001980">
    <property type="entry name" value="PPAT"/>
</dbReference>
<dbReference type="InterPro" id="IPR014729">
    <property type="entry name" value="Rossmann-like_a/b/a_fold"/>
</dbReference>
<dbReference type="NCBIfam" id="TIGR01510">
    <property type="entry name" value="coaD_prev_kdtB"/>
    <property type="match status" value="1"/>
</dbReference>
<dbReference type="NCBIfam" id="TIGR00125">
    <property type="entry name" value="cyt_tran_rel"/>
    <property type="match status" value="1"/>
</dbReference>
<dbReference type="PANTHER" id="PTHR21342">
    <property type="entry name" value="PHOSPHOPANTETHEINE ADENYLYLTRANSFERASE"/>
    <property type="match status" value="1"/>
</dbReference>
<dbReference type="PANTHER" id="PTHR21342:SF1">
    <property type="entry name" value="PHOSPHOPANTETHEINE ADENYLYLTRANSFERASE"/>
    <property type="match status" value="1"/>
</dbReference>
<dbReference type="Pfam" id="PF01467">
    <property type="entry name" value="CTP_transf_like"/>
    <property type="match status" value="1"/>
</dbReference>
<dbReference type="PRINTS" id="PR01020">
    <property type="entry name" value="LPSBIOSNTHSS"/>
</dbReference>
<dbReference type="SUPFAM" id="SSF52374">
    <property type="entry name" value="Nucleotidylyl transferase"/>
    <property type="match status" value="1"/>
</dbReference>
<accession>P63818</accession>
<accession>Q99UX9</accession>
<proteinExistence type="inferred from homology"/>
<reference key="1">
    <citation type="journal article" date="2001" name="Lancet">
        <title>Whole genome sequencing of meticillin-resistant Staphylococcus aureus.</title>
        <authorList>
            <person name="Kuroda M."/>
            <person name="Ohta T."/>
            <person name="Uchiyama I."/>
            <person name="Baba T."/>
            <person name="Yuzawa H."/>
            <person name="Kobayashi I."/>
            <person name="Cui L."/>
            <person name="Oguchi A."/>
            <person name="Aoki K."/>
            <person name="Nagai Y."/>
            <person name="Lian J.-Q."/>
            <person name="Ito T."/>
            <person name="Kanamori M."/>
            <person name="Matsumaru H."/>
            <person name="Maruyama A."/>
            <person name="Murakami H."/>
            <person name="Hosoyama A."/>
            <person name="Mizutani-Ui Y."/>
            <person name="Takahashi N.K."/>
            <person name="Sawano T."/>
            <person name="Inoue R."/>
            <person name="Kaito C."/>
            <person name="Sekimizu K."/>
            <person name="Hirakawa H."/>
            <person name="Kuhara S."/>
            <person name="Goto S."/>
            <person name="Yabuzaki J."/>
            <person name="Kanehisa M."/>
            <person name="Yamashita A."/>
            <person name="Oshima K."/>
            <person name="Furuya K."/>
            <person name="Yoshino C."/>
            <person name="Shiba T."/>
            <person name="Hattori M."/>
            <person name="Ogasawara N."/>
            <person name="Hayashi H."/>
            <person name="Hiramatsu K."/>
        </authorList>
    </citation>
    <scope>NUCLEOTIDE SEQUENCE [LARGE SCALE GENOMIC DNA]</scope>
    <source>
        <strain>Mu50 / ATCC 700699</strain>
    </source>
</reference>
<protein>
    <recommendedName>
        <fullName evidence="1">Phosphopantetheine adenylyltransferase</fullName>
        <ecNumber evidence="1">2.7.7.3</ecNumber>
    </recommendedName>
    <alternativeName>
        <fullName evidence="1">Dephospho-CoA pyrophosphorylase</fullName>
    </alternativeName>
    <alternativeName>
        <fullName evidence="1">Pantetheine-phosphate adenylyltransferase</fullName>
        <shortName evidence="1">PPAT</shortName>
    </alternativeName>
</protein>
<evidence type="ECO:0000255" key="1">
    <source>
        <dbReference type="HAMAP-Rule" id="MF_00151"/>
    </source>
</evidence>
<comment type="function">
    <text evidence="1">Reversibly transfers an adenylyl group from ATP to 4'-phosphopantetheine, yielding dephospho-CoA (dPCoA) and pyrophosphate.</text>
</comment>
<comment type="catalytic activity">
    <reaction evidence="1">
        <text>(R)-4'-phosphopantetheine + ATP + H(+) = 3'-dephospho-CoA + diphosphate</text>
        <dbReference type="Rhea" id="RHEA:19801"/>
        <dbReference type="ChEBI" id="CHEBI:15378"/>
        <dbReference type="ChEBI" id="CHEBI:30616"/>
        <dbReference type="ChEBI" id="CHEBI:33019"/>
        <dbReference type="ChEBI" id="CHEBI:57328"/>
        <dbReference type="ChEBI" id="CHEBI:61723"/>
        <dbReference type="EC" id="2.7.7.3"/>
    </reaction>
</comment>
<comment type="cofactor">
    <cofactor evidence="1">
        <name>Mg(2+)</name>
        <dbReference type="ChEBI" id="CHEBI:18420"/>
    </cofactor>
</comment>
<comment type="pathway">
    <text evidence="1">Cofactor biosynthesis; coenzyme A biosynthesis; CoA from (R)-pantothenate: step 4/5.</text>
</comment>
<comment type="subunit">
    <text evidence="1">Homohexamer.</text>
</comment>
<comment type="subcellular location">
    <subcellularLocation>
        <location evidence="1">Cytoplasm</location>
    </subcellularLocation>
</comment>
<comment type="similarity">
    <text evidence="1">Belongs to the bacterial CoaD family.</text>
</comment>
<keyword id="KW-0067">ATP-binding</keyword>
<keyword id="KW-0173">Coenzyme A biosynthesis</keyword>
<keyword id="KW-0963">Cytoplasm</keyword>
<keyword id="KW-0460">Magnesium</keyword>
<keyword id="KW-0547">Nucleotide-binding</keyword>
<keyword id="KW-0548">Nucleotidyltransferase</keyword>
<keyword id="KW-0808">Transferase</keyword>
<feature type="chain" id="PRO_0000156272" description="Phosphopantetheine adenylyltransferase">
    <location>
        <begin position="1"/>
        <end position="160"/>
    </location>
</feature>
<feature type="binding site" evidence="1">
    <location>
        <begin position="11"/>
        <end position="12"/>
    </location>
    <ligand>
        <name>ATP</name>
        <dbReference type="ChEBI" id="CHEBI:30616"/>
    </ligand>
</feature>
<feature type="binding site" evidence="1">
    <location>
        <position position="11"/>
    </location>
    <ligand>
        <name>substrate</name>
    </ligand>
</feature>
<feature type="binding site" evidence="1">
    <location>
        <position position="19"/>
    </location>
    <ligand>
        <name>ATP</name>
        <dbReference type="ChEBI" id="CHEBI:30616"/>
    </ligand>
</feature>
<feature type="binding site" evidence="1">
    <location>
        <position position="43"/>
    </location>
    <ligand>
        <name>substrate</name>
    </ligand>
</feature>
<feature type="binding site" evidence="1">
    <location>
        <position position="75"/>
    </location>
    <ligand>
        <name>substrate</name>
    </ligand>
</feature>
<feature type="binding site" evidence="1">
    <location>
        <position position="89"/>
    </location>
    <ligand>
        <name>substrate</name>
    </ligand>
</feature>
<feature type="binding site" evidence="1">
    <location>
        <begin position="90"/>
        <end position="92"/>
    </location>
    <ligand>
        <name>ATP</name>
        <dbReference type="ChEBI" id="CHEBI:30616"/>
    </ligand>
</feature>
<feature type="binding site" evidence="1">
    <location>
        <position position="100"/>
    </location>
    <ligand>
        <name>ATP</name>
        <dbReference type="ChEBI" id="CHEBI:30616"/>
    </ligand>
</feature>
<feature type="binding site" evidence="1">
    <location>
        <begin position="125"/>
        <end position="131"/>
    </location>
    <ligand>
        <name>ATP</name>
        <dbReference type="ChEBI" id="CHEBI:30616"/>
    </ligand>
</feature>
<feature type="site" description="Transition state stabilizer" evidence="1">
    <location>
        <position position="19"/>
    </location>
</feature>